<reference key="1">
    <citation type="submission" date="1997-02" db="EMBL/GenBank/DDBJ databases">
        <authorList>
            <person name="Murillo L.A."/>
            <person name="Hernandez E."/>
            <person name="Echeverry S.J."/>
            <person name="Mendez J.A."/>
            <person name="Moreno A."/>
            <person name="Patarroyo M.E."/>
        </authorList>
    </citation>
    <scope>NUCLEOTIDE SEQUENCE [MRNA]</scope>
</reference>
<dbReference type="EMBL" id="U88362">
    <property type="protein sequence ID" value="AAD41537.1"/>
    <property type="molecule type" value="mRNA"/>
</dbReference>
<dbReference type="SMR" id="Q7JFM4"/>
<dbReference type="GlyCosmos" id="Q7JFM4">
    <property type="glycosylation" value="1 site, No reported glycans"/>
</dbReference>
<dbReference type="GO" id="GO:0005615">
    <property type="term" value="C:extracellular space"/>
    <property type="evidence" value="ECO:0007669"/>
    <property type="project" value="UniProtKB-KW"/>
</dbReference>
<dbReference type="GO" id="GO:0005125">
    <property type="term" value="F:cytokine activity"/>
    <property type="evidence" value="ECO:0007669"/>
    <property type="project" value="UniProtKB-KW"/>
</dbReference>
<dbReference type="GO" id="GO:0008083">
    <property type="term" value="F:growth factor activity"/>
    <property type="evidence" value="ECO:0007669"/>
    <property type="project" value="UniProtKB-KW"/>
</dbReference>
<dbReference type="GO" id="GO:0005134">
    <property type="term" value="F:interleukin-2 receptor binding"/>
    <property type="evidence" value="ECO:0007669"/>
    <property type="project" value="InterPro"/>
</dbReference>
<dbReference type="GO" id="GO:0002250">
    <property type="term" value="P:adaptive immune response"/>
    <property type="evidence" value="ECO:0007669"/>
    <property type="project" value="UniProtKB-KW"/>
</dbReference>
<dbReference type="FunFam" id="1.20.1250.10:FF:000025">
    <property type="entry name" value="Interleukin-2"/>
    <property type="match status" value="1"/>
</dbReference>
<dbReference type="Gene3D" id="1.20.1250.10">
    <property type="match status" value="1"/>
</dbReference>
<dbReference type="InterPro" id="IPR009079">
    <property type="entry name" value="4_helix_cytokine-like_core"/>
</dbReference>
<dbReference type="InterPro" id="IPR000779">
    <property type="entry name" value="IL-2"/>
</dbReference>
<dbReference type="InterPro" id="IPR030477">
    <property type="entry name" value="IL-2_CS"/>
</dbReference>
<dbReference type="PANTHER" id="PTHR48487">
    <property type="entry name" value="INTERLEUKIN-2"/>
    <property type="match status" value="1"/>
</dbReference>
<dbReference type="PANTHER" id="PTHR48487:SF1">
    <property type="entry name" value="INTERLEUKIN-2"/>
    <property type="match status" value="1"/>
</dbReference>
<dbReference type="Pfam" id="PF00715">
    <property type="entry name" value="IL2"/>
    <property type="match status" value="1"/>
</dbReference>
<dbReference type="PRINTS" id="PR00265">
    <property type="entry name" value="INTERLEUKIN2"/>
</dbReference>
<dbReference type="SMART" id="SM00189">
    <property type="entry name" value="IL2"/>
    <property type="match status" value="1"/>
</dbReference>
<dbReference type="SUPFAM" id="SSF47266">
    <property type="entry name" value="4-helical cytokines"/>
    <property type="match status" value="1"/>
</dbReference>
<dbReference type="PROSITE" id="PS00424">
    <property type="entry name" value="INTERLEUKIN_2"/>
    <property type="match status" value="1"/>
</dbReference>
<gene>
    <name type="primary">IL2</name>
</gene>
<proteinExistence type="evidence at transcript level"/>
<protein>
    <recommendedName>
        <fullName>Interleukin-2</fullName>
        <shortName>IL-2</shortName>
    </recommendedName>
    <alternativeName>
        <fullName>T-cell growth factor</fullName>
        <shortName>TCGF</shortName>
    </alternativeName>
</protein>
<sequence>MYRMQLLSCIALSLALITNSAPTSSSTKKTQLQLEHLLLDLQMLLNGINNYKNPKLTRMLTFKFYMPKKATELKHLQCLEEELKPLEEVLNLAQSKNFHLRDTRDIISNINVLVLELKGSETTFTCEYDDDTATIIEFLNGWITFCQSIISTLT</sequence>
<keyword id="KW-1064">Adaptive immunity</keyword>
<keyword id="KW-0202">Cytokine</keyword>
<keyword id="KW-1015">Disulfide bond</keyword>
<keyword id="KW-0325">Glycoprotein</keyword>
<keyword id="KW-0339">Growth factor</keyword>
<keyword id="KW-0391">Immunity</keyword>
<keyword id="KW-0964">Secreted</keyword>
<keyword id="KW-0732">Signal</keyword>
<feature type="signal peptide" evidence="1">
    <location>
        <begin position="1"/>
        <end position="20"/>
    </location>
</feature>
<feature type="chain" id="PRO_0000015473" description="Interleukin-2">
    <location>
        <begin position="21"/>
        <end position="154"/>
    </location>
</feature>
<feature type="glycosylation site" description="O-linked (GalNAc...) threonine" evidence="1">
    <location>
        <position position="23"/>
    </location>
</feature>
<feature type="disulfide bond" evidence="1">
    <location>
        <begin position="78"/>
        <end position="126"/>
    </location>
</feature>
<accession>Q7JFM4</accession>
<evidence type="ECO:0000250" key="1"/>
<evidence type="ECO:0000250" key="2">
    <source>
        <dbReference type="UniProtKB" id="P60568"/>
    </source>
</evidence>
<evidence type="ECO:0000305" key="3"/>
<name>IL2_AOTVO</name>
<organism>
    <name type="scientific">Aotus vociferans</name>
    <name type="common">Spix's night monkey</name>
    <name type="synonym">Nyctipithecus vociferans</name>
    <dbReference type="NCBI Taxonomy" id="57176"/>
    <lineage>
        <taxon>Eukaryota</taxon>
        <taxon>Metazoa</taxon>
        <taxon>Chordata</taxon>
        <taxon>Craniata</taxon>
        <taxon>Vertebrata</taxon>
        <taxon>Euteleostomi</taxon>
        <taxon>Mammalia</taxon>
        <taxon>Eutheria</taxon>
        <taxon>Euarchontoglires</taxon>
        <taxon>Primates</taxon>
        <taxon>Haplorrhini</taxon>
        <taxon>Platyrrhini</taxon>
        <taxon>Aotidae</taxon>
        <taxon>Aotus</taxon>
    </lineage>
</organism>
<comment type="function">
    <text evidence="2">Cytokine produced by activated CD4-positive helper T-cells and to a lesser extend activated CD8-positive T-cells and natural killer (NK) cells that plays pivotal roles in the immune response and tolerance. Binds to a receptor complex composed of either the high-affinity trimeric IL-2R (IL2RA/CD25, IL2RB/CD122 and IL2RG/CD132) or the low-affinity dimeric IL-2R (IL2RB and IL2RG). Interaction with the receptor leads to oligomerization and conformation changes in the IL-2R subunits resulting in downstream signaling starting with phosphorylation of JAK1 and JAK3. In turn, JAK1 and JAK3 phosphorylate the receptor to form a docking site leading to the phosphorylation of several substrates including STAT5. This process leads to activation of several pathways including STAT, phosphoinositide-3-kinase/PI3K and mitogen-activated protein kinase/MAPK pathways. Functions as a T-cell growth factor and can increase NK-cell cytolytic activity as well. Promotes strong proliferation of activated B-cells and subsequently immunoglobulin production. Plays a pivotal role in regulating the adaptive immune system by controlling the survival and proliferation of regulatory T-cells, which are required for the maintenance of immune tolerance. Moreover, participates in the differentiation and homeostasis of effector T-cell subsets, including Th1, Th2, Th17 as well as memory CD8-positive T-cells.</text>
</comment>
<comment type="subcellular location">
    <subcellularLocation>
        <location evidence="1">Secreted</location>
    </subcellularLocation>
</comment>
<comment type="similarity">
    <text evidence="3">Belongs to the IL-2 family.</text>
</comment>